<sequence>MDIVSLAWAALMVVFTFSLSLVVWGRSGL</sequence>
<evidence type="ECO:0000255" key="1">
    <source>
        <dbReference type="HAMAP-Rule" id="MF_00395"/>
    </source>
</evidence>
<feature type="chain" id="PRO_0000275548" description="Cytochrome b6-f complex subunit 8">
    <location>
        <begin position="1"/>
        <end position="29"/>
    </location>
</feature>
<feature type="transmembrane region" description="Helical" evidence="1">
    <location>
        <begin position="3"/>
        <end position="23"/>
    </location>
</feature>
<protein>
    <recommendedName>
        <fullName evidence="1">Cytochrome b6-f complex subunit 8</fullName>
    </recommendedName>
    <alternativeName>
        <fullName evidence="1">Cytochrome b6-f complex subunit PetN</fullName>
    </alternativeName>
    <alternativeName>
        <fullName evidence="1">Cytochrome b6-f complex subunit VIII</fullName>
    </alternativeName>
</protein>
<geneLocation type="chloroplast"/>
<proteinExistence type="inferred from homology"/>
<dbReference type="EMBL" id="DQ898156">
    <property type="protein sequence ID" value="ABI32417.1"/>
    <property type="molecule type" value="Genomic_DNA"/>
</dbReference>
<dbReference type="RefSeq" id="YP_740110.1">
    <property type="nucleotide sequence ID" value="NC_008325.1"/>
</dbReference>
<dbReference type="SMR" id="Q0G9W9"/>
<dbReference type="GeneID" id="4266721"/>
<dbReference type="GO" id="GO:0009535">
    <property type="term" value="C:chloroplast thylakoid membrane"/>
    <property type="evidence" value="ECO:0007669"/>
    <property type="project" value="UniProtKB-SubCell"/>
</dbReference>
<dbReference type="GO" id="GO:0009512">
    <property type="term" value="C:cytochrome b6f complex"/>
    <property type="evidence" value="ECO:0007669"/>
    <property type="project" value="InterPro"/>
</dbReference>
<dbReference type="GO" id="GO:0045158">
    <property type="term" value="F:electron transporter, transferring electrons within cytochrome b6/f complex of photosystem II activity"/>
    <property type="evidence" value="ECO:0007669"/>
    <property type="project" value="InterPro"/>
</dbReference>
<dbReference type="GO" id="GO:0017004">
    <property type="term" value="P:cytochrome complex assembly"/>
    <property type="evidence" value="ECO:0007669"/>
    <property type="project" value="UniProtKB-UniRule"/>
</dbReference>
<dbReference type="GO" id="GO:0015979">
    <property type="term" value="P:photosynthesis"/>
    <property type="evidence" value="ECO:0007669"/>
    <property type="project" value="UniProtKB-KW"/>
</dbReference>
<dbReference type="HAMAP" id="MF_00395">
    <property type="entry name" value="Cytb6_f_PetN"/>
    <property type="match status" value="1"/>
</dbReference>
<dbReference type="InterPro" id="IPR036143">
    <property type="entry name" value="Cytochr_b6-f_cplx_su8_sf"/>
</dbReference>
<dbReference type="InterPro" id="IPR005497">
    <property type="entry name" value="Cytochrome_b6-f_cplx_su8"/>
</dbReference>
<dbReference type="Pfam" id="PF03742">
    <property type="entry name" value="PetN"/>
    <property type="match status" value="1"/>
</dbReference>
<dbReference type="SUPFAM" id="SSF103451">
    <property type="entry name" value="PetN subunit of the cytochrome b6f complex"/>
    <property type="match status" value="1"/>
</dbReference>
<reference key="1">
    <citation type="journal article" date="2006" name="BMC Genomics">
        <title>Complete plastid genome sequence of Daucus carota: implications for biotechnology and phylogeny of angiosperms.</title>
        <authorList>
            <person name="Ruhlman T."/>
            <person name="Lee S.-B."/>
            <person name="Jansen R.K."/>
            <person name="Hostetler J.B."/>
            <person name="Tallon L.J."/>
            <person name="Town C.D."/>
            <person name="Daniell H."/>
        </authorList>
    </citation>
    <scope>NUCLEOTIDE SEQUENCE [LARGE SCALE GENOMIC DNA]</scope>
    <source>
        <strain>cv. Danvers Half-long</strain>
    </source>
</reference>
<accession>Q0G9W9</accession>
<name>PETN_DAUCA</name>
<gene>
    <name evidence="1" type="primary">petN</name>
</gene>
<organism>
    <name type="scientific">Daucus carota</name>
    <name type="common">Wild carrot</name>
    <dbReference type="NCBI Taxonomy" id="4039"/>
    <lineage>
        <taxon>Eukaryota</taxon>
        <taxon>Viridiplantae</taxon>
        <taxon>Streptophyta</taxon>
        <taxon>Embryophyta</taxon>
        <taxon>Tracheophyta</taxon>
        <taxon>Spermatophyta</taxon>
        <taxon>Magnoliopsida</taxon>
        <taxon>eudicotyledons</taxon>
        <taxon>Gunneridae</taxon>
        <taxon>Pentapetalae</taxon>
        <taxon>asterids</taxon>
        <taxon>campanulids</taxon>
        <taxon>Apiales</taxon>
        <taxon>Apiaceae</taxon>
        <taxon>Apioideae</taxon>
        <taxon>Scandiceae</taxon>
        <taxon>Daucinae</taxon>
        <taxon>Daucus</taxon>
        <taxon>Daucus sect. Daucus</taxon>
    </lineage>
</organism>
<keyword id="KW-0150">Chloroplast</keyword>
<keyword id="KW-0249">Electron transport</keyword>
<keyword id="KW-0472">Membrane</keyword>
<keyword id="KW-0602">Photosynthesis</keyword>
<keyword id="KW-0934">Plastid</keyword>
<keyword id="KW-0793">Thylakoid</keyword>
<keyword id="KW-0812">Transmembrane</keyword>
<keyword id="KW-1133">Transmembrane helix</keyword>
<keyword id="KW-0813">Transport</keyword>
<comment type="function">
    <text evidence="1">Component of the cytochrome b6-f complex, which mediates electron transfer between photosystem II (PSII) and photosystem I (PSI), cyclic electron flow around PSI, and state transitions.</text>
</comment>
<comment type="subunit">
    <text evidence="1">The 4 large subunits of the cytochrome b6-f complex are cytochrome b6, subunit IV (17 kDa polypeptide, PetD), cytochrome f and the Rieske protein, while the 4 small subunits are PetG, PetL, PetM and PetN. The complex functions as a dimer.</text>
</comment>
<comment type="subcellular location">
    <subcellularLocation>
        <location>Plastid</location>
        <location>Chloroplast thylakoid membrane</location>
        <topology>Single-pass membrane protein</topology>
    </subcellularLocation>
</comment>
<comment type="similarity">
    <text evidence="1">Belongs to the PetN family.</text>
</comment>